<protein>
    <recommendedName>
        <fullName evidence="1">Ketol-acid reductoisomerase (NADP(+))</fullName>
        <shortName evidence="1">KARI</shortName>
        <ecNumber evidence="1">1.1.1.86</ecNumber>
    </recommendedName>
    <alternativeName>
        <fullName evidence="1">Acetohydroxy-acid isomeroreductase</fullName>
        <shortName evidence="1">AHIR</shortName>
    </alternativeName>
    <alternativeName>
        <fullName evidence="1">Alpha-keto-beta-hydroxylacyl reductoisomerase</fullName>
    </alternativeName>
    <alternativeName>
        <fullName evidence="1">Ketol-acid reductoisomerase type 1</fullName>
    </alternativeName>
    <alternativeName>
        <fullName evidence="1">Ketol-acid reductoisomerase type I</fullName>
    </alternativeName>
</protein>
<sequence length="341" mass="37374">MVKVYYNGDANEAYIQGKKVAIIGYGSQGHAHAQNLRDSGVEVIIGLRKGKSWEKAEQDGFVVLPVSEATKQADVVMILLPDEHQPKVYKEEIAPNLQPGNALVFAHGFNIHFNQIVPPSDVDVFLVAPKGPGHLVRRTYTEGAGVPALIAVYQDVSGEAKETALAYAKAIGSARAGVIETTFKEETETDLFGEQAVLCGGLTALVKAGFETLVEAGYQPEIAYFECLHELKLIVDLMYEGGLAGMRYSISDTAQWGDFVTGPRIINDAVKAEMKKVLEDIQTGKFAKGWILENEANRPEFNAINRRENEHLIEVVGRELRKMMPFVNAKQKDVVTVGAKN</sequence>
<comment type="function">
    <text evidence="1">Involved in the biosynthesis of branched-chain amino acids (BCAA). Catalyzes an alkyl-migration followed by a ketol-acid reduction of (S)-2-acetolactate (S2AL) to yield (R)-2,3-dihydroxy-isovalerate. In the isomerase reaction, S2AL is rearranged via a Mg-dependent methyl migration to produce 3-hydroxy-3-methyl-2-ketobutyrate (HMKB). In the reductase reaction, this 2-ketoacid undergoes a metal-dependent reduction by NADPH to yield (R)-2,3-dihydroxy-isovalerate.</text>
</comment>
<comment type="catalytic activity">
    <reaction evidence="1">
        <text>(2R)-2,3-dihydroxy-3-methylbutanoate + NADP(+) = (2S)-2-acetolactate + NADPH + H(+)</text>
        <dbReference type="Rhea" id="RHEA:22068"/>
        <dbReference type="ChEBI" id="CHEBI:15378"/>
        <dbReference type="ChEBI" id="CHEBI:49072"/>
        <dbReference type="ChEBI" id="CHEBI:57783"/>
        <dbReference type="ChEBI" id="CHEBI:58349"/>
        <dbReference type="ChEBI" id="CHEBI:58476"/>
        <dbReference type="EC" id="1.1.1.86"/>
    </reaction>
</comment>
<comment type="catalytic activity">
    <reaction evidence="1">
        <text>(2R,3R)-2,3-dihydroxy-3-methylpentanoate + NADP(+) = (S)-2-ethyl-2-hydroxy-3-oxobutanoate + NADPH + H(+)</text>
        <dbReference type="Rhea" id="RHEA:13493"/>
        <dbReference type="ChEBI" id="CHEBI:15378"/>
        <dbReference type="ChEBI" id="CHEBI:49256"/>
        <dbReference type="ChEBI" id="CHEBI:49258"/>
        <dbReference type="ChEBI" id="CHEBI:57783"/>
        <dbReference type="ChEBI" id="CHEBI:58349"/>
        <dbReference type="EC" id="1.1.1.86"/>
    </reaction>
</comment>
<comment type="cofactor">
    <cofactor evidence="1">
        <name>Mg(2+)</name>
        <dbReference type="ChEBI" id="CHEBI:18420"/>
    </cofactor>
    <text evidence="1">Binds 2 magnesium ions per subunit.</text>
</comment>
<comment type="pathway">
    <text evidence="1">Amino-acid biosynthesis; L-isoleucine biosynthesis; L-isoleucine from 2-oxobutanoate: step 2/4.</text>
</comment>
<comment type="pathway">
    <text evidence="1">Amino-acid biosynthesis; L-valine biosynthesis; L-valine from pyruvate: step 2/4.</text>
</comment>
<comment type="similarity">
    <text evidence="1">Belongs to the ketol-acid reductoisomerase family.</text>
</comment>
<reference key="1">
    <citation type="journal article" date="2008" name="Genome Biol.">
        <title>Encapsulated in silica: genome, proteome and physiology of the thermophilic bacterium Anoxybacillus flavithermus WK1.</title>
        <authorList>
            <person name="Saw J.H."/>
            <person name="Mountain B.W."/>
            <person name="Feng L."/>
            <person name="Omelchenko M.V."/>
            <person name="Hou S."/>
            <person name="Saito J.A."/>
            <person name="Stott M.B."/>
            <person name="Li D."/>
            <person name="Zhao G."/>
            <person name="Wu J."/>
            <person name="Galperin M.Y."/>
            <person name="Koonin E.V."/>
            <person name="Makarova K.S."/>
            <person name="Wolf Y.I."/>
            <person name="Rigden D.J."/>
            <person name="Dunfield P.F."/>
            <person name="Wang L."/>
            <person name="Alam M."/>
        </authorList>
    </citation>
    <scope>NUCLEOTIDE SEQUENCE [LARGE SCALE GENOMIC DNA]</scope>
    <source>
        <strain>DSM 21510 / WK1</strain>
    </source>
</reference>
<proteinExistence type="inferred from homology"/>
<feature type="chain" id="PRO_1000190907" description="Ketol-acid reductoisomerase (NADP(+))">
    <location>
        <begin position="1"/>
        <end position="341"/>
    </location>
</feature>
<feature type="domain" description="KARI N-terminal Rossmann" evidence="2">
    <location>
        <begin position="2"/>
        <end position="181"/>
    </location>
</feature>
<feature type="domain" description="KARI C-terminal knotted" evidence="3">
    <location>
        <begin position="182"/>
        <end position="327"/>
    </location>
</feature>
<feature type="active site" evidence="1">
    <location>
        <position position="107"/>
    </location>
</feature>
<feature type="binding site" evidence="1">
    <location>
        <begin position="25"/>
        <end position="28"/>
    </location>
    <ligand>
        <name>NADP(+)</name>
        <dbReference type="ChEBI" id="CHEBI:58349"/>
    </ligand>
</feature>
<feature type="binding site" evidence="1">
    <location>
        <position position="48"/>
    </location>
    <ligand>
        <name>NADP(+)</name>
        <dbReference type="ChEBI" id="CHEBI:58349"/>
    </ligand>
</feature>
<feature type="binding site" evidence="1">
    <location>
        <position position="52"/>
    </location>
    <ligand>
        <name>NADP(+)</name>
        <dbReference type="ChEBI" id="CHEBI:58349"/>
    </ligand>
</feature>
<feature type="binding site" evidence="1">
    <location>
        <begin position="82"/>
        <end position="85"/>
    </location>
    <ligand>
        <name>NADP(+)</name>
        <dbReference type="ChEBI" id="CHEBI:58349"/>
    </ligand>
</feature>
<feature type="binding site" evidence="1">
    <location>
        <position position="133"/>
    </location>
    <ligand>
        <name>NADP(+)</name>
        <dbReference type="ChEBI" id="CHEBI:58349"/>
    </ligand>
</feature>
<feature type="binding site" evidence="1">
    <location>
        <position position="190"/>
    </location>
    <ligand>
        <name>Mg(2+)</name>
        <dbReference type="ChEBI" id="CHEBI:18420"/>
        <label>1</label>
    </ligand>
</feature>
<feature type="binding site" evidence="1">
    <location>
        <position position="190"/>
    </location>
    <ligand>
        <name>Mg(2+)</name>
        <dbReference type="ChEBI" id="CHEBI:18420"/>
        <label>2</label>
    </ligand>
</feature>
<feature type="binding site" evidence="1">
    <location>
        <position position="194"/>
    </location>
    <ligand>
        <name>Mg(2+)</name>
        <dbReference type="ChEBI" id="CHEBI:18420"/>
        <label>1</label>
    </ligand>
</feature>
<feature type="binding site" evidence="1">
    <location>
        <position position="226"/>
    </location>
    <ligand>
        <name>Mg(2+)</name>
        <dbReference type="ChEBI" id="CHEBI:18420"/>
        <label>2</label>
    </ligand>
</feature>
<feature type="binding site" evidence="1">
    <location>
        <position position="230"/>
    </location>
    <ligand>
        <name>Mg(2+)</name>
        <dbReference type="ChEBI" id="CHEBI:18420"/>
        <label>2</label>
    </ligand>
</feature>
<feature type="binding site" evidence="1">
    <location>
        <position position="251"/>
    </location>
    <ligand>
        <name>substrate</name>
    </ligand>
</feature>
<keyword id="KW-0028">Amino-acid biosynthesis</keyword>
<keyword id="KW-0100">Branched-chain amino acid biosynthesis</keyword>
<keyword id="KW-0460">Magnesium</keyword>
<keyword id="KW-0479">Metal-binding</keyword>
<keyword id="KW-0521">NADP</keyword>
<keyword id="KW-0560">Oxidoreductase</keyword>
<organism>
    <name type="scientific">Anoxybacillus flavithermus (strain DSM 21510 / WK1)</name>
    <dbReference type="NCBI Taxonomy" id="491915"/>
    <lineage>
        <taxon>Bacteria</taxon>
        <taxon>Bacillati</taxon>
        <taxon>Bacillota</taxon>
        <taxon>Bacilli</taxon>
        <taxon>Bacillales</taxon>
        <taxon>Anoxybacillaceae</taxon>
        <taxon>Anoxybacillus</taxon>
    </lineage>
</organism>
<accession>B7GH18</accession>
<dbReference type="EC" id="1.1.1.86" evidence="1"/>
<dbReference type="EMBL" id="CP000922">
    <property type="protein sequence ID" value="ACJ32974.1"/>
    <property type="molecule type" value="Genomic_DNA"/>
</dbReference>
<dbReference type="RefSeq" id="WP_012574281.1">
    <property type="nucleotide sequence ID" value="NC_011567.1"/>
</dbReference>
<dbReference type="SMR" id="B7GH18"/>
<dbReference type="STRING" id="491915.Aflv_0593"/>
<dbReference type="GeneID" id="7036850"/>
<dbReference type="KEGG" id="afl:Aflv_0593"/>
<dbReference type="PATRIC" id="fig|491915.6.peg.610"/>
<dbReference type="eggNOG" id="COG0059">
    <property type="taxonomic scope" value="Bacteria"/>
</dbReference>
<dbReference type="HOGENOM" id="CLU_033821_0_1_9"/>
<dbReference type="UniPathway" id="UPA00047">
    <property type="reaction ID" value="UER00056"/>
</dbReference>
<dbReference type="UniPathway" id="UPA00049">
    <property type="reaction ID" value="UER00060"/>
</dbReference>
<dbReference type="Proteomes" id="UP000000742">
    <property type="component" value="Chromosome"/>
</dbReference>
<dbReference type="GO" id="GO:0005829">
    <property type="term" value="C:cytosol"/>
    <property type="evidence" value="ECO:0007669"/>
    <property type="project" value="TreeGrafter"/>
</dbReference>
<dbReference type="GO" id="GO:0004455">
    <property type="term" value="F:ketol-acid reductoisomerase activity"/>
    <property type="evidence" value="ECO:0007669"/>
    <property type="project" value="UniProtKB-UniRule"/>
</dbReference>
<dbReference type="GO" id="GO:0000287">
    <property type="term" value="F:magnesium ion binding"/>
    <property type="evidence" value="ECO:0007669"/>
    <property type="project" value="UniProtKB-UniRule"/>
</dbReference>
<dbReference type="GO" id="GO:0050661">
    <property type="term" value="F:NADP binding"/>
    <property type="evidence" value="ECO:0007669"/>
    <property type="project" value="InterPro"/>
</dbReference>
<dbReference type="GO" id="GO:0009097">
    <property type="term" value="P:isoleucine biosynthetic process"/>
    <property type="evidence" value="ECO:0007669"/>
    <property type="project" value="UniProtKB-UniRule"/>
</dbReference>
<dbReference type="GO" id="GO:0009099">
    <property type="term" value="P:L-valine biosynthetic process"/>
    <property type="evidence" value="ECO:0007669"/>
    <property type="project" value="UniProtKB-UniRule"/>
</dbReference>
<dbReference type="FunFam" id="3.40.50.720:FF:000023">
    <property type="entry name" value="Ketol-acid reductoisomerase (NADP(+))"/>
    <property type="match status" value="1"/>
</dbReference>
<dbReference type="Gene3D" id="6.10.240.10">
    <property type="match status" value="1"/>
</dbReference>
<dbReference type="Gene3D" id="3.40.50.720">
    <property type="entry name" value="NAD(P)-binding Rossmann-like Domain"/>
    <property type="match status" value="1"/>
</dbReference>
<dbReference type="HAMAP" id="MF_00435">
    <property type="entry name" value="IlvC"/>
    <property type="match status" value="1"/>
</dbReference>
<dbReference type="InterPro" id="IPR008927">
    <property type="entry name" value="6-PGluconate_DH-like_C_sf"/>
</dbReference>
<dbReference type="InterPro" id="IPR013023">
    <property type="entry name" value="KARI"/>
</dbReference>
<dbReference type="InterPro" id="IPR000506">
    <property type="entry name" value="KARI_C"/>
</dbReference>
<dbReference type="InterPro" id="IPR013116">
    <property type="entry name" value="KARI_N"/>
</dbReference>
<dbReference type="InterPro" id="IPR014359">
    <property type="entry name" value="KARI_prok"/>
</dbReference>
<dbReference type="InterPro" id="IPR036291">
    <property type="entry name" value="NAD(P)-bd_dom_sf"/>
</dbReference>
<dbReference type="NCBIfam" id="TIGR00465">
    <property type="entry name" value="ilvC"/>
    <property type="match status" value="1"/>
</dbReference>
<dbReference type="NCBIfam" id="NF004017">
    <property type="entry name" value="PRK05479.1"/>
    <property type="match status" value="1"/>
</dbReference>
<dbReference type="NCBIfam" id="NF009940">
    <property type="entry name" value="PRK13403.1"/>
    <property type="match status" value="1"/>
</dbReference>
<dbReference type="PANTHER" id="PTHR21371">
    <property type="entry name" value="KETOL-ACID REDUCTOISOMERASE, MITOCHONDRIAL"/>
    <property type="match status" value="1"/>
</dbReference>
<dbReference type="PANTHER" id="PTHR21371:SF1">
    <property type="entry name" value="KETOL-ACID REDUCTOISOMERASE, MITOCHONDRIAL"/>
    <property type="match status" value="1"/>
</dbReference>
<dbReference type="Pfam" id="PF01450">
    <property type="entry name" value="KARI_C"/>
    <property type="match status" value="1"/>
</dbReference>
<dbReference type="Pfam" id="PF07991">
    <property type="entry name" value="KARI_N"/>
    <property type="match status" value="1"/>
</dbReference>
<dbReference type="PIRSF" id="PIRSF000116">
    <property type="entry name" value="IlvC_gammaproteo"/>
    <property type="match status" value="1"/>
</dbReference>
<dbReference type="SUPFAM" id="SSF48179">
    <property type="entry name" value="6-phosphogluconate dehydrogenase C-terminal domain-like"/>
    <property type="match status" value="1"/>
</dbReference>
<dbReference type="SUPFAM" id="SSF51735">
    <property type="entry name" value="NAD(P)-binding Rossmann-fold domains"/>
    <property type="match status" value="1"/>
</dbReference>
<dbReference type="PROSITE" id="PS51851">
    <property type="entry name" value="KARI_C"/>
    <property type="match status" value="1"/>
</dbReference>
<dbReference type="PROSITE" id="PS51850">
    <property type="entry name" value="KARI_N"/>
    <property type="match status" value="1"/>
</dbReference>
<evidence type="ECO:0000255" key="1">
    <source>
        <dbReference type="HAMAP-Rule" id="MF_00435"/>
    </source>
</evidence>
<evidence type="ECO:0000255" key="2">
    <source>
        <dbReference type="PROSITE-ProRule" id="PRU01197"/>
    </source>
</evidence>
<evidence type="ECO:0000255" key="3">
    <source>
        <dbReference type="PROSITE-ProRule" id="PRU01198"/>
    </source>
</evidence>
<name>ILVC_ANOFW</name>
<gene>
    <name evidence="1" type="primary">ilvC</name>
    <name type="ordered locus">Aflv_0593</name>
</gene>